<dbReference type="EC" id="3.6.1.27" evidence="1"/>
<dbReference type="EMBL" id="AE008918">
    <property type="protein sequence ID" value="AAL53499.1"/>
    <property type="molecule type" value="Genomic_DNA"/>
</dbReference>
<dbReference type="PIR" id="AH3541">
    <property type="entry name" value="AH3541"/>
</dbReference>
<dbReference type="RefSeq" id="WP_002965610.1">
    <property type="nucleotide sequence ID" value="NZ_GG703779.1"/>
</dbReference>
<dbReference type="SMR" id="P67384"/>
<dbReference type="KEGG" id="bme:BMEII0258"/>
<dbReference type="KEGG" id="bmel:DK63_2984"/>
<dbReference type="PATRIC" id="fig|224914.52.peg.3130"/>
<dbReference type="eggNOG" id="COG1968">
    <property type="taxonomic scope" value="Bacteria"/>
</dbReference>
<dbReference type="Proteomes" id="UP000000419">
    <property type="component" value="Chromosome II"/>
</dbReference>
<dbReference type="GO" id="GO:0005886">
    <property type="term" value="C:plasma membrane"/>
    <property type="evidence" value="ECO:0007669"/>
    <property type="project" value="UniProtKB-SubCell"/>
</dbReference>
<dbReference type="GO" id="GO:0050380">
    <property type="term" value="F:undecaprenyl-diphosphatase activity"/>
    <property type="evidence" value="ECO:0007669"/>
    <property type="project" value="UniProtKB-UniRule"/>
</dbReference>
<dbReference type="GO" id="GO:0071555">
    <property type="term" value="P:cell wall organization"/>
    <property type="evidence" value="ECO:0007669"/>
    <property type="project" value="UniProtKB-KW"/>
</dbReference>
<dbReference type="GO" id="GO:0009252">
    <property type="term" value="P:peptidoglycan biosynthetic process"/>
    <property type="evidence" value="ECO:0007669"/>
    <property type="project" value="UniProtKB-KW"/>
</dbReference>
<dbReference type="GO" id="GO:0008360">
    <property type="term" value="P:regulation of cell shape"/>
    <property type="evidence" value="ECO:0007669"/>
    <property type="project" value="UniProtKB-KW"/>
</dbReference>
<dbReference type="GO" id="GO:0046677">
    <property type="term" value="P:response to antibiotic"/>
    <property type="evidence" value="ECO:0007669"/>
    <property type="project" value="UniProtKB-UniRule"/>
</dbReference>
<dbReference type="HAMAP" id="MF_01006">
    <property type="entry name" value="Undec_diphosphatase"/>
    <property type="match status" value="1"/>
</dbReference>
<dbReference type="InterPro" id="IPR003824">
    <property type="entry name" value="UppP"/>
</dbReference>
<dbReference type="NCBIfam" id="NF001389">
    <property type="entry name" value="PRK00281.1-2"/>
    <property type="match status" value="1"/>
</dbReference>
<dbReference type="NCBIfam" id="TIGR00753">
    <property type="entry name" value="undec_PP_bacA"/>
    <property type="match status" value="1"/>
</dbReference>
<dbReference type="PANTHER" id="PTHR30622">
    <property type="entry name" value="UNDECAPRENYL-DIPHOSPHATASE"/>
    <property type="match status" value="1"/>
</dbReference>
<dbReference type="PANTHER" id="PTHR30622:SF3">
    <property type="entry name" value="UNDECAPRENYL-DIPHOSPHATASE"/>
    <property type="match status" value="1"/>
</dbReference>
<dbReference type="Pfam" id="PF02673">
    <property type="entry name" value="BacA"/>
    <property type="match status" value="1"/>
</dbReference>
<gene>
    <name evidence="1" type="primary">uppP</name>
    <name type="synonym">bacA</name>
    <name type="synonym">upk</name>
    <name type="ordered locus">BMEII0258</name>
</gene>
<accession>P67384</accession>
<accession>Q8YDC0</accession>
<organism>
    <name type="scientific">Brucella melitensis biotype 1 (strain ATCC 23456 / CCUG 17765 / NCTC 10094 / 16M)</name>
    <dbReference type="NCBI Taxonomy" id="224914"/>
    <lineage>
        <taxon>Bacteria</taxon>
        <taxon>Pseudomonadati</taxon>
        <taxon>Pseudomonadota</taxon>
        <taxon>Alphaproteobacteria</taxon>
        <taxon>Hyphomicrobiales</taxon>
        <taxon>Brucellaceae</taxon>
        <taxon>Brucella/Ochrobactrum group</taxon>
        <taxon>Brucella</taxon>
    </lineage>
</organism>
<evidence type="ECO:0000255" key="1">
    <source>
        <dbReference type="HAMAP-Rule" id="MF_01006"/>
    </source>
</evidence>
<reference key="1">
    <citation type="journal article" date="2002" name="Proc. Natl. Acad. Sci. U.S.A.">
        <title>The genome sequence of the facultative intracellular pathogen Brucella melitensis.</title>
        <authorList>
            <person name="DelVecchio V.G."/>
            <person name="Kapatral V."/>
            <person name="Redkar R.J."/>
            <person name="Patra G."/>
            <person name="Mujer C."/>
            <person name="Los T."/>
            <person name="Ivanova N."/>
            <person name="Anderson I."/>
            <person name="Bhattacharyya A."/>
            <person name="Lykidis A."/>
            <person name="Reznik G."/>
            <person name="Jablonski L."/>
            <person name="Larsen N."/>
            <person name="D'Souza M."/>
            <person name="Bernal A."/>
            <person name="Mazur M."/>
            <person name="Goltsman E."/>
            <person name="Selkov E."/>
            <person name="Elzer P.H."/>
            <person name="Hagius S."/>
            <person name="O'Callaghan D."/>
            <person name="Letesson J.-J."/>
            <person name="Haselkorn R."/>
            <person name="Kyrpides N.C."/>
            <person name="Overbeek R."/>
        </authorList>
    </citation>
    <scope>NUCLEOTIDE SEQUENCE [LARGE SCALE GENOMIC DNA]</scope>
    <source>
        <strain>ATCC 23456 / CCUG 17765 / NCTC 10094 / 16M</strain>
    </source>
</reference>
<feature type="chain" id="PRO_0000151120" description="Undecaprenyl-diphosphatase">
    <location>
        <begin position="1"/>
        <end position="268"/>
    </location>
</feature>
<feature type="transmembrane region" description="Helical" evidence="1">
    <location>
        <begin position="3"/>
        <end position="23"/>
    </location>
</feature>
<feature type="transmembrane region" description="Helical" evidence="1">
    <location>
        <begin position="46"/>
        <end position="66"/>
    </location>
</feature>
<feature type="transmembrane region" description="Helical" evidence="1">
    <location>
        <begin position="84"/>
        <end position="104"/>
    </location>
</feature>
<feature type="transmembrane region" description="Helical" evidence="1">
    <location>
        <begin position="107"/>
        <end position="127"/>
    </location>
</feature>
<feature type="transmembrane region" description="Helical" evidence="1">
    <location>
        <begin position="144"/>
        <end position="164"/>
    </location>
</feature>
<feature type="transmembrane region" description="Helical" evidence="1">
    <location>
        <begin position="185"/>
        <end position="205"/>
    </location>
</feature>
<feature type="transmembrane region" description="Helical" evidence="1">
    <location>
        <begin position="213"/>
        <end position="233"/>
    </location>
</feature>
<feature type="transmembrane region" description="Helical" evidence="1">
    <location>
        <begin position="246"/>
        <end position="266"/>
    </location>
</feature>
<name>UPPP_BRUME</name>
<sequence>MDFFNLLEAAFLGLIEGLTEFIPVSSTGHLLLIGHFLGFESTGKTFEVLIQLGAILAILSVYSAKLARIATDFPRDARTRRFVLGVLVAFLPAAVIGALAHGFIKGVLFETPMLVCIMLIVGGFILLWVDQLNLRPRYHNVMDYPLPICLAIGFIQCLAMIPGVSRSGSTIVGSLLLGADKRSAAEFSFFLAMPTMAGAFAYDLFKSRNILSFNDGALIVVGFIMAFISGVFVVRHLLDYVSRHGFALFGWWRLIVGSAGMAALIIWG</sequence>
<proteinExistence type="inferred from homology"/>
<protein>
    <recommendedName>
        <fullName evidence="1">Undecaprenyl-diphosphatase</fullName>
        <ecNumber evidence="1">3.6.1.27</ecNumber>
    </recommendedName>
    <alternativeName>
        <fullName evidence="1">Bacitracin resistance protein</fullName>
    </alternativeName>
    <alternativeName>
        <fullName evidence="1">Undecaprenyl pyrophosphate phosphatase</fullName>
    </alternativeName>
</protein>
<keyword id="KW-0046">Antibiotic resistance</keyword>
<keyword id="KW-0997">Cell inner membrane</keyword>
<keyword id="KW-1003">Cell membrane</keyword>
<keyword id="KW-0133">Cell shape</keyword>
<keyword id="KW-0961">Cell wall biogenesis/degradation</keyword>
<keyword id="KW-0378">Hydrolase</keyword>
<keyword id="KW-0472">Membrane</keyword>
<keyword id="KW-0573">Peptidoglycan synthesis</keyword>
<keyword id="KW-0812">Transmembrane</keyword>
<keyword id="KW-1133">Transmembrane helix</keyword>
<comment type="function">
    <text evidence="1">Catalyzes the dephosphorylation of undecaprenyl diphosphate (UPP). Confers resistance to bacitracin.</text>
</comment>
<comment type="catalytic activity">
    <reaction evidence="1">
        <text>di-trans,octa-cis-undecaprenyl diphosphate + H2O = di-trans,octa-cis-undecaprenyl phosphate + phosphate + H(+)</text>
        <dbReference type="Rhea" id="RHEA:28094"/>
        <dbReference type="ChEBI" id="CHEBI:15377"/>
        <dbReference type="ChEBI" id="CHEBI:15378"/>
        <dbReference type="ChEBI" id="CHEBI:43474"/>
        <dbReference type="ChEBI" id="CHEBI:58405"/>
        <dbReference type="ChEBI" id="CHEBI:60392"/>
        <dbReference type="EC" id="3.6.1.27"/>
    </reaction>
</comment>
<comment type="subcellular location">
    <subcellularLocation>
        <location evidence="1">Cell inner membrane</location>
        <topology evidence="1">Multi-pass membrane protein</topology>
    </subcellularLocation>
</comment>
<comment type="miscellaneous">
    <text>Bacitracin is thought to be involved in the inhibition of peptidoglycan synthesis by sequestering undecaprenyl diphosphate, thereby reducing the pool of lipid carrier available.</text>
</comment>
<comment type="similarity">
    <text evidence="1">Belongs to the UppP family.</text>
</comment>